<comment type="function">
    <text>Cyclin partner of the cyclin-dependent kinase (CDK) PHO85. Has a role in cell integrity and polarized cell growth together with the other PCL1/PCL2 cyclin family members.</text>
</comment>
<comment type="subunit">
    <text>Forms a cyclin-CDK complex with PHO85.</text>
</comment>
<comment type="interaction">
    <interactant intactId="EBI-4762">
        <id>P35190</id>
    </interactant>
    <interactant intactId="EBI-13327">
        <id>P17157</id>
        <label>PHO85</label>
    </interactant>
    <organismsDiffer>false</organismsDiffer>
    <experiments>3</experiments>
</comment>
<comment type="interaction">
    <interactant intactId="EBI-4762">
        <id>P35190</id>
    </interactant>
    <interactant intactId="EBI-8591">
        <id>P10591</id>
        <label>SSA1</label>
    </interactant>
    <organismsDiffer>false</organismsDiffer>
    <experiments>3</experiments>
</comment>
<comment type="similarity">
    <text evidence="1">Belongs to the cyclin family. PCL1,2 subfamily.</text>
</comment>
<protein>
    <recommendedName>
        <fullName>PHO85 cyclin CLG1</fullName>
    </recommendedName>
    <alternativeName>
        <fullName>Cyclin-like G1 protein 1</fullName>
    </alternativeName>
</protein>
<sequence>MANTFKYYPETMGNSSGYPISLPFPKGSATSAVNVARQLPKYLGHVPSQSVHTQLPSMASLGYFNQPSSTYYAPPAPLQQHQQPPILPPPGLMYTSNNNSNVIPPPVQMIRDGQQQPQQSNQVNGGVSENLDYDISIMSKFIMENAFVAFNANYSTDDQTTDLFFKGISSVLNATRLPSATIFLAIDYLFKYINKLSNGIHSIGGNSINIIYQNTMIAFILANKFNDDKTFTNNSWSQATGILINVINDFERQWLRIFNWELYDSAFLYFEFVKNFEIFKQNQLKPAVAVPTLLSPIVNVGDTRNVNFNLKPTSTNNLLSPVSNYETPMLMPHNMFSSPSYQSNSRSEFSSMNGYYNYYNYNQPRLNYYQQFPNIYSSPISETQFDYDFYNFSSQQQQQQQKQHSLLPAAPQLPPPHVHNQSYGHHLGWKSMDDTINHSRFERNYFPYSAVY</sequence>
<reference key="1">
    <citation type="journal article" date="1993" name="Yeast">
        <title>CLG1, a new cyclin-like gene of Saccharomyces cerevisiae.</title>
        <authorList>
            <person name="Matsumoto Y."/>
            <person name="Wickner R.B."/>
        </authorList>
    </citation>
    <scope>NUCLEOTIDE SEQUENCE [MRNA]</scope>
</reference>
<reference key="2">
    <citation type="journal article" date="1997" name="Yeast">
        <title>Sequence analysis of 203 kilobases from Saccharomyces cerevisiae chromosome VII.</title>
        <authorList>
            <person name="Rieger M."/>
            <person name="Brueckner M."/>
            <person name="Schaefer M."/>
            <person name="Mueller-Auer S."/>
        </authorList>
    </citation>
    <scope>NUCLEOTIDE SEQUENCE [GENOMIC DNA]</scope>
    <source>
        <strain>ATCC 204508 / S288c</strain>
    </source>
</reference>
<reference key="3">
    <citation type="journal article" date="1997" name="Yeast">
        <title>Analysis of 21.7 kb DNA sequence from the left arm of chromosome VII reveals 11 open reading frames: two correspond to new genes.</title>
        <authorList>
            <person name="Feuermann M."/>
            <person name="Simeonava L."/>
            <person name="Souciet J.-L."/>
            <person name="Potier S."/>
        </authorList>
    </citation>
    <scope>NUCLEOTIDE SEQUENCE [GENOMIC DNA]</scope>
</reference>
<reference key="4">
    <citation type="journal article" date="1997" name="Nature">
        <title>The nucleotide sequence of Saccharomyces cerevisiae chromosome VII.</title>
        <authorList>
            <person name="Tettelin H."/>
            <person name="Agostoni-Carbone M.L."/>
            <person name="Albermann K."/>
            <person name="Albers M."/>
            <person name="Arroyo J."/>
            <person name="Backes U."/>
            <person name="Barreiros T."/>
            <person name="Bertani I."/>
            <person name="Bjourson A.J."/>
            <person name="Brueckner M."/>
            <person name="Bruschi C.V."/>
            <person name="Carignani G."/>
            <person name="Castagnoli L."/>
            <person name="Cerdan E."/>
            <person name="Clemente M.L."/>
            <person name="Coblenz A."/>
            <person name="Coglievina M."/>
            <person name="Coissac E."/>
            <person name="Defoor E."/>
            <person name="Del Bino S."/>
            <person name="Delius H."/>
            <person name="Delneri D."/>
            <person name="de Wergifosse P."/>
            <person name="Dujon B."/>
            <person name="Durand P."/>
            <person name="Entian K.-D."/>
            <person name="Eraso P."/>
            <person name="Escribano V."/>
            <person name="Fabiani L."/>
            <person name="Fartmann B."/>
            <person name="Feroli F."/>
            <person name="Feuermann M."/>
            <person name="Frontali L."/>
            <person name="Garcia-Gonzalez M."/>
            <person name="Garcia-Saez M.I."/>
            <person name="Goffeau A."/>
            <person name="Guerreiro P."/>
            <person name="Hani J."/>
            <person name="Hansen M."/>
            <person name="Hebling U."/>
            <person name="Hernandez K."/>
            <person name="Heumann K."/>
            <person name="Hilger F."/>
            <person name="Hofmann B."/>
            <person name="Indge K.J."/>
            <person name="James C.M."/>
            <person name="Klima R."/>
            <person name="Koetter P."/>
            <person name="Kramer B."/>
            <person name="Kramer W."/>
            <person name="Lauquin G."/>
            <person name="Leuther H."/>
            <person name="Louis E.J."/>
            <person name="Maillier E."/>
            <person name="Marconi A."/>
            <person name="Martegani E."/>
            <person name="Mazon M.J."/>
            <person name="Mazzoni C."/>
            <person name="McReynolds A.D.K."/>
            <person name="Melchioretto P."/>
            <person name="Mewes H.-W."/>
            <person name="Minenkova O."/>
            <person name="Mueller-Auer S."/>
            <person name="Nawrocki A."/>
            <person name="Netter P."/>
            <person name="Neu R."/>
            <person name="Nombela C."/>
            <person name="Oliver S.G."/>
            <person name="Panzeri L."/>
            <person name="Paoluzi S."/>
            <person name="Plevani P."/>
            <person name="Portetelle D."/>
            <person name="Portillo F."/>
            <person name="Potier S."/>
            <person name="Purnelle B."/>
            <person name="Rieger M."/>
            <person name="Riles L."/>
            <person name="Rinaldi T."/>
            <person name="Robben J."/>
            <person name="Rodrigues-Pousada C."/>
            <person name="Rodriguez-Belmonte E."/>
            <person name="Rodriguez-Torres A.M."/>
            <person name="Rose M."/>
            <person name="Ruzzi M."/>
            <person name="Saliola M."/>
            <person name="Sanchez-Perez M."/>
            <person name="Schaefer B."/>
            <person name="Schaefer M."/>
            <person name="Scharfe M."/>
            <person name="Schmidheini T."/>
            <person name="Schreer A."/>
            <person name="Skala J."/>
            <person name="Souciet J.-L."/>
            <person name="Steensma H.Y."/>
            <person name="Talla E."/>
            <person name="Thierry A."/>
            <person name="Vandenbol M."/>
            <person name="van der Aart Q.J.M."/>
            <person name="Van Dyck L."/>
            <person name="Vanoni M."/>
            <person name="Verhasselt P."/>
            <person name="Voet M."/>
            <person name="Volckaert G."/>
            <person name="Wambutt R."/>
            <person name="Watson M.D."/>
            <person name="Weber N."/>
            <person name="Wedler E."/>
            <person name="Wedler H."/>
            <person name="Wipfli P."/>
            <person name="Wolf K."/>
            <person name="Wright L.F."/>
            <person name="Zaccaria P."/>
            <person name="Zimmermann M."/>
            <person name="Zollner A."/>
            <person name="Kleine K."/>
        </authorList>
    </citation>
    <scope>NUCLEOTIDE SEQUENCE [LARGE SCALE GENOMIC DNA]</scope>
    <source>
        <strain>ATCC 204508 / S288c</strain>
    </source>
</reference>
<reference key="5">
    <citation type="journal article" date="2014" name="G3 (Bethesda)">
        <title>The reference genome sequence of Saccharomyces cerevisiae: Then and now.</title>
        <authorList>
            <person name="Engel S.R."/>
            <person name="Dietrich F.S."/>
            <person name="Fisk D.G."/>
            <person name="Binkley G."/>
            <person name="Balakrishnan R."/>
            <person name="Costanzo M.C."/>
            <person name="Dwight S.S."/>
            <person name="Hitz B.C."/>
            <person name="Karra K."/>
            <person name="Nash R.S."/>
            <person name="Weng S."/>
            <person name="Wong E.D."/>
            <person name="Lloyd P."/>
            <person name="Skrzypek M.S."/>
            <person name="Miyasato S.R."/>
            <person name="Simison M."/>
            <person name="Cherry J.M."/>
        </authorList>
    </citation>
    <scope>GENOME REANNOTATION</scope>
    <source>
        <strain>ATCC 204508 / S288c</strain>
    </source>
</reference>
<reference key="6">
    <citation type="journal article" date="1997" name="Mol. Cell. Biol.">
        <title>A family of cyclin-like proteins that interact with the Pho85 cyclin-dependent kinase.</title>
        <authorList>
            <person name="Measday V."/>
            <person name="Moore L."/>
            <person name="Retnakaran R."/>
            <person name="Lee J."/>
            <person name="Donoviel M."/>
            <person name="Neiman A.M."/>
            <person name="Andrews B.J."/>
        </authorList>
    </citation>
    <scope>INTERACTION WITH PHO85</scope>
</reference>
<feature type="chain" id="PRO_0000080503" description="PHO85 cyclin CLG1">
    <location>
        <begin position="1"/>
        <end position="452"/>
    </location>
</feature>
<organism>
    <name type="scientific">Saccharomyces cerevisiae (strain ATCC 204508 / S288c)</name>
    <name type="common">Baker's yeast</name>
    <dbReference type="NCBI Taxonomy" id="559292"/>
    <lineage>
        <taxon>Eukaryota</taxon>
        <taxon>Fungi</taxon>
        <taxon>Dikarya</taxon>
        <taxon>Ascomycota</taxon>
        <taxon>Saccharomycotina</taxon>
        <taxon>Saccharomycetes</taxon>
        <taxon>Saccharomycetales</taxon>
        <taxon>Saccharomycetaceae</taxon>
        <taxon>Saccharomyces</taxon>
    </lineage>
</organism>
<keyword id="KW-0195">Cyclin</keyword>
<keyword id="KW-1185">Reference proteome</keyword>
<accession>P35190</accession>
<accession>D6VTU1</accession>
<dbReference type="EMBL" id="L11612">
    <property type="protein sequence ID" value="AAA16919.1"/>
    <property type="molecule type" value="mRNA"/>
</dbReference>
<dbReference type="EMBL" id="Z72737">
    <property type="protein sequence ID" value="CAA96931.1"/>
    <property type="molecule type" value="Genomic_DNA"/>
</dbReference>
<dbReference type="EMBL" id="BK006941">
    <property type="protein sequence ID" value="DAA07902.1"/>
    <property type="molecule type" value="Genomic_DNA"/>
</dbReference>
<dbReference type="PIR" id="S37607">
    <property type="entry name" value="S37607"/>
</dbReference>
<dbReference type="RefSeq" id="NP_011300.1">
    <property type="nucleotide sequence ID" value="NM_001181080.1"/>
</dbReference>
<dbReference type="BioGRID" id="33042">
    <property type="interactions" value="238"/>
</dbReference>
<dbReference type="ComplexPortal" id="CPX-1693">
    <property type="entry name" value="CLG1-PHO85 kinase complex"/>
</dbReference>
<dbReference type="DIP" id="DIP-1507N"/>
<dbReference type="FunCoup" id="P35190">
    <property type="interactions" value="44"/>
</dbReference>
<dbReference type="IntAct" id="P35190">
    <property type="interactions" value="9"/>
</dbReference>
<dbReference type="MINT" id="P35190"/>
<dbReference type="STRING" id="4932.YGL215W"/>
<dbReference type="iPTMnet" id="P35190"/>
<dbReference type="PaxDb" id="4932-YGL215W"/>
<dbReference type="PeptideAtlas" id="P35190"/>
<dbReference type="EnsemblFungi" id="YGL215W_mRNA">
    <property type="protein sequence ID" value="YGL215W"/>
    <property type="gene ID" value="YGL215W"/>
</dbReference>
<dbReference type="GeneID" id="852657"/>
<dbReference type="KEGG" id="sce:YGL215W"/>
<dbReference type="AGR" id="SGD:S000003183"/>
<dbReference type="SGD" id="S000003183">
    <property type="gene designation" value="CLG1"/>
</dbReference>
<dbReference type="VEuPathDB" id="FungiDB:YGL215W"/>
<dbReference type="eggNOG" id="ENOG502RYK1">
    <property type="taxonomic scope" value="Eukaryota"/>
</dbReference>
<dbReference type="GeneTree" id="ENSGT00390000000862"/>
<dbReference type="HOGENOM" id="CLU_034017_0_0_1"/>
<dbReference type="InParanoid" id="P35190"/>
<dbReference type="OMA" id="MYYPNYA"/>
<dbReference type="OrthoDB" id="244495at2759"/>
<dbReference type="BioCyc" id="YEAST:G3O-30691-MONOMER"/>
<dbReference type="BioGRID-ORCS" id="852657">
    <property type="hits" value="2 hits in 10 CRISPR screens"/>
</dbReference>
<dbReference type="PRO" id="PR:P35190"/>
<dbReference type="Proteomes" id="UP000002311">
    <property type="component" value="Chromosome VII"/>
</dbReference>
<dbReference type="RNAct" id="P35190">
    <property type="molecule type" value="protein"/>
</dbReference>
<dbReference type="GO" id="GO:0000307">
    <property type="term" value="C:cyclin-dependent protein kinase holoenzyme complex"/>
    <property type="evidence" value="ECO:0000353"/>
    <property type="project" value="ComplexPortal"/>
</dbReference>
<dbReference type="GO" id="GO:0005634">
    <property type="term" value="C:nucleus"/>
    <property type="evidence" value="ECO:0000318"/>
    <property type="project" value="GO_Central"/>
</dbReference>
<dbReference type="GO" id="GO:0016538">
    <property type="term" value="F:cyclin-dependent protein serine/threonine kinase regulator activity"/>
    <property type="evidence" value="ECO:0000314"/>
    <property type="project" value="SGD"/>
</dbReference>
<dbReference type="GO" id="GO:0019901">
    <property type="term" value="F:protein kinase binding"/>
    <property type="evidence" value="ECO:0007669"/>
    <property type="project" value="InterPro"/>
</dbReference>
<dbReference type="GO" id="GO:0016239">
    <property type="term" value="P:positive regulation of macroautophagy"/>
    <property type="evidence" value="ECO:0000315"/>
    <property type="project" value="SGD"/>
</dbReference>
<dbReference type="GO" id="GO:0051726">
    <property type="term" value="P:regulation of cell cycle"/>
    <property type="evidence" value="ECO:0000303"/>
    <property type="project" value="ComplexPortal"/>
</dbReference>
<dbReference type="CDD" id="cd20557">
    <property type="entry name" value="CYCLIN_ScPCL1-like"/>
    <property type="match status" value="1"/>
</dbReference>
<dbReference type="Gene3D" id="1.10.472.10">
    <property type="entry name" value="Cyclin-like"/>
    <property type="match status" value="1"/>
</dbReference>
<dbReference type="InterPro" id="IPR013922">
    <property type="entry name" value="Cyclin_PHO80-like"/>
</dbReference>
<dbReference type="PANTHER" id="PTHR15615">
    <property type="match status" value="1"/>
</dbReference>
<dbReference type="PANTHER" id="PTHR15615:SF27">
    <property type="entry name" value="PHO85 CYCLIN CLG1"/>
    <property type="match status" value="1"/>
</dbReference>
<proteinExistence type="evidence at protein level"/>
<gene>
    <name type="primary">CLG1</name>
    <name type="ordered locus">YGL215W</name>
    <name type="ORF">G1105</name>
</gene>
<evidence type="ECO:0000305" key="1"/>
<name>CLG1_YEAST</name>